<protein>
    <recommendedName>
        <fullName>Neurotoxin LmNaTx3</fullName>
    </recommendedName>
</protein>
<proteinExistence type="evidence at transcript level"/>
<organism>
    <name type="scientific">Lychas mucronatus</name>
    <name type="common">Chinese swimming scorpion</name>
    <dbReference type="NCBI Taxonomy" id="172552"/>
    <lineage>
        <taxon>Eukaryota</taxon>
        <taxon>Metazoa</taxon>
        <taxon>Ecdysozoa</taxon>
        <taxon>Arthropoda</taxon>
        <taxon>Chelicerata</taxon>
        <taxon>Arachnida</taxon>
        <taxon>Scorpiones</taxon>
        <taxon>Buthida</taxon>
        <taxon>Buthoidea</taxon>
        <taxon>Buthidae</taxon>
        <taxon>Lychas</taxon>
    </lineage>
</organism>
<name>SNAA3_LYCMC</name>
<comment type="function">
    <text evidence="1">Binds voltage-independently at site-3 of voltage-gated sodium channels (Nav) and inhibits the inactivation of the activated channels, thereby blocking neuronal transmission.</text>
</comment>
<comment type="subcellular location">
    <subcellularLocation>
        <location evidence="1">Secreted</location>
    </subcellularLocation>
</comment>
<comment type="tissue specificity">
    <text>Expressed by the venom gland.</text>
</comment>
<comment type="domain">
    <text evidence="4">Has the structural arrangement of an alpha-helix connected to antiparallel beta-sheets by disulfide bonds (CS-alpha/beta).</text>
</comment>
<comment type="similarity">
    <text evidence="4">Belongs to the long (4 C-C) scorpion toxin superfamily. Sodium channel inhibitor family. Alpha subfamily.</text>
</comment>
<keyword id="KW-1015">Disulfide bond</keyword>
<keyword id="KW-0872">Ion channel impairing toxin</keyword>
<keyword id="KW-0528">Neurotoxin</keyword>
<keyword id="KW-0964">Secreted</keyword>
<keyword id="KW-0732">Signal</keyword>
<keyword id="KW-0800">Toxin</keyword>
<keyword id="KW-0738">Voltage-gated sodium channel impairing toxin</keyword>
<feature type="signal peptide" evidence="2">
    <location>
        <begin position="1"/>
        <end position="21"/>
    </location>
</feature>
<feature type="chain" id="PRO_0000403814" description="Neurotoxin LmNaTx3">
    <location>
        <begin position="22"/>
        <end position="83"/>
    </location>
</feature>
<feature type="domain" description="LCN-type CS-alpha/beta" evidence="3">
    <location>
        <begin position="22"/>
        <end position="83"/>
    </location>
</feature>
<feature type="disulfide bond" evidence="3">
    <location>
        <begin position="32"/>
        <end position="83"/>
    </location>
</feature>
<feature type="disulfide bond" evidence="3">
    <location>
        <begin position="36"/>
        <end position="59"/>
    </location>
</feature>
<feature type="disulfide bond" evidence="3">
    <location>
        <begin position="45"/>
        <end position="64"/>
    </location>
</feature>
<feature type="disulfide bond" evidence="3">
    <location>
        <begin position="49"/>
        <end position="66"/>
    </location>
</feature>
<accession>D9U298</accession>
<evidence type="ECO:0000250" key="1"/>
<evidence type="ECO:0000255" key="2"/>
<evidence type="ECO:0000255" key="3">
    <source>
        <dbReference type="PROSITE-ProRule" id="PRU01210"/>
    </source>
</evidence>
<evidence type="ECO:0000305" key="4"/>
<dbReference type="EMBL" id="EU159278">
    <property type="protein sequence ID" value="ABX76751.1"/>
    <property type="molecule type" value="mRNA"/>
</dbReference>
<dbReference type="SMR" id="D9U298"/>
<dbReference type="GO" id="GO:0005576">
    <property type="term" value="C:extracellular region"/>
    <property type="evidence" value="ECO:0007669"/>
    <property type="project" value="UniProtKB-SubCell"/>
</dbReference>
<dbReference type="GO" id="GO:0019871">
    <property type="term" value="F:sodium channel inhibitor activity"/>
    <property type="evidence" value="ECO:0007669"/>
    <property type="project" value="InterPro"/>
</dbReference>
<dbReference type="GO" id="GO:0090729">
    <property type="term" value="F:toxin activity"/>
    <property type="evidence" value="ECO:0007669"/>
    <property type="project" value="UniProtKB-KW"/>
</dbReference>
<dbReference type="GO" id="GO:0006952">
    <property type="term" value="P:defense response"/>
    <property type="evidence" value="ECO:0007669"/>
    <property type="project" value="InterPro"/>
</dbReference>
<dbReference type="CDD" id="cd23106">
    <property type="entry name" value="neurotoxins_LC_scorpion"/>
    <property type="match status" value="1"/>
</dbReference>
<dbReference type="Gene3D" id="3.30.30.10">
    <property type="entry name" value="Knottin, scorpion toxin-like"/>
    <property type="match status" value="1"/>
</dbReference>
<dbReference type="InterPro" id="IPR044062">
    <property type="entry name" value="LCN-type_CS_alpha_beta_dom"/>
</dbReference>
<dbReference type="InterPro" id="IPR003614">
    <property type="entry name" value="Scorpion_toxin-like"/>
</dbReference>
<dbReference type="InterPro" id="IPR036574">
    <property type="entry name" value="Scorpion_toxin-like_sf"/>
</dbReference>
<dbReference type="InterPro" id="IPR018218">
    <property type="entry name" value="Scorpion_toxinL"/>
</dbReference>
<dbReference type="InterPro" id="IPR002061">
    <property type="entry name" value="Scorpion_toxinL/defensin"/>
</dbReference>
<dbReference type="Pfam" id="PF00537">
    <property type="entry name" value="Toxin_3"/>
    <property type="match status" value="1"/>
</dbReference>
<dbReference type="PRINTS" id="PR00285">
    <property type="entry name" value="SCORPNTOXIN"/>
</dbReference>
<dbReference type="SMART" id="SM00505">
    <property type="entry name" value="Knot1"/>
    <property type="match status" value="1"/>
</dbReference>
<dbReference type="SUPFAM" id="SSF57095">
    <property type="entry name" value="Scorpion toxin-like"/>
    <property type="match status" value="1"/>
</dbReference>
<dbReference type="PROSITE" id="PS51863">
    <property type="entry name" value="LCN_CSAB"/>
    <property type="match status" value="1"/>
</dbReference>
<reference key="1">
    <citation type="journal article" date="2010" name="BMC Genomics">
        <title>Comparative venom gland transcriptome analysis of the scorpion Lychas mucronatus reveals intraspecific toxic gene diversity and new venomous components.</title>
        <authorList>
            <person name="Zhao R."/>
            <person name="Ma Y."/>
            <person name="He Y."/>
            <person name="Di Z."/>
            <person name="Wu Y.-L."/>
            <person name="Cao Z.-J."/>
            <person name="Li W.-X."/>
        </authorList>
    </citation>
    <scope>NUCLEOTIDE SEQUENCE [MRNA]</scope>
    <source>
        <strain>Hainan</strain>
        <tissue>Venom gland</tissue>
    </source>
</reference>
<sequence length="83" mass="9488">MQLKIQLLMLVLMIVLTDVYSKDGFIVSKKNCLYRCSQSDERGFCNAVCLRYDADSGYCRTGKCWCDGLPQKANIAMKNKNYC</sequence>